<dbReference type="EMBL" id="AE006914">
    <property type="protein sequence ID" value="AAL03733.1"/>
    <property type="molecule type" value="Genomic_DNA"/>
</dbReference>
<dbReference type="PIR" id="C97849">
    <property type="entry name" value="C97849"/>
</dbReference>
<dbReference type="SMR" id="Q92GC8"/>
<dbReference type="KEGG" id="rco:RC1195"/>
<dbReference type="HOGENOM" id="CLU_2411305_0_0_5"/>
<dbReference type="Proteomes" id="UP000000816">
    <property type="component" value="Chromosome"/>
</dbReference>
<dbReference type="GO" id="GO:0003677">
    <property type="term" value="F:DNA binding"/>
    <property type="evidence" value="ECO:0007669"/>
    <property type="project" value="UniProtKB-KW"/>
</dbReference>
<dbReference type="CDD" id="cd00093">
    <property type="entry name" value="HTH_XRE"/>
    <property type="match status" value="1"/>
</dbReference>
<dbReference type="Gene3D" id="1.10.260.40">
    <property type="entry name" value="lambda repressor-like DNA-binding domains"/>
    <property type="match status" value="1"/>
</dbReference>
<dbReference type="InterPro" id="IPR001387">
    <property type="entry name" value="Cro/C1-type_HTH"/>
</dbReference>
<dbReference type="InterPro" id="IPR010982">
    <property type="entry name" value="Lambda_DNA-bd_dom_sf"/>
</dbReference>
<dbReference type="Pfam" id="PF13443">
    <property type="entry name" value="HTH_26"/>
    <property type="match status" value="1"/>
</dbReference>
<dbReference type="SMART" id="SM00530">
    <property type="entry name" value="HTH_XRE"/>
    <property type="match status" value="1"/>
</dbReference>
<dbReference type="SUPFAM" id="SSF47413">
    <property type="entry name" value="lambda repressor-like DNA-binding domains"/>
    <property type="match status" value="1"/>
</dbReference>
<dbReference type="PROSITE" id="PS50943">
    <property type="entry name" value="HTH_CROC1"/>
    <property type="match status" value="1"/>
</dbReference>
<protein>
    <recommendedName>
        <fullName>Uncharacterized HTH-type transcriptional regulator RC1195</fullName>
    </recommendedName>
</protein>
<sequence>MKLSRLFDPCNKAGNTRLCIYLSFIYSEVINMALATKVKEFLEEKLKQEKIDRKYLAEVTNIPYTTVSRIMRAEANREFNPEIDTILKIAKYFNCTMDEVIKRKVQNNS</sequence>
<proteinExistence type="predicted"/>
<organism>
    <name type="scientific">Rickettsia conorii (strain ATCC VR-613 / Malish 7)</name>
    <dbReference type="NCBI Taxonomy" id="272944"/>
    <lineage>
        <taxon>Bacteria</taxon>
        <taxon>Pseudomonadati</taxon>
        <taxon>Pseudomonadota</taxon>
        <taxon>Alphaproteobacteria</taxon>
        <taxon>Rickettsiales</taxon>
        <taxon>Rickettsiaceae</taxon>
        <taxon>Rickettsieae</taxon>
        <taxon>Rickettsia</taxon>
        <taxon>spotted fever group</taxon>
    </lineage>
</organism>
<reference key="1">
    <citation type="journal article" date="2001" name="Science">
        <title>Mechanisms of evolution in Rickettsia conorii and R. prowazekii.</title>
        <authorList>
            <person name="Ogata H."/>
            <person name="Audic S."/>
            <person name="Renesto-Audiffren P."/>
            <person name="Fournier P.-E."/>
            <person name="Barbe V."/>
            <person name="Samson D."/>
            <person name="Roux V."/>
            <person name="Cossart P."/>
            <person name="Weissenbach J."/>
            <person name="Claverie J.-M."/>
            <person name="Raoult D."/>
        </authorList>
    </citation>
    <scope>NUCLEOTIDE SEQUENCE [LARGE SCALE GENOMIC DNA]</scope>
    <source>
        <strain>ATCC VR-613 / Malish 7</strain>
    </source>
</reference>
<evidence type="ECO:0000255" key="1">
    <source>
        <dbReference type="PROSITE-ProRule" id="PRU00257"/>
    </source>
</evidence>
<keyword id="KW-0238">DNA-binding</keyword>
<keyword id="KW-0804">Transcription</keyword>
<keyword id="KW-0805">Transcription regulation</keyword>
<gene>
    <name type="ordered locus">RC1195</name>
</gene>
<feature type="chain" id="PRO_0000149782" description="Uncharacterized HTH-type transcriptional regulator RC1195">
    <location>
        <begin position="1"/>
        <end position="109"/>
    </location>
</feature>
<feature type="domain" description="HTH cro/C1-type" evidence="1">
    <location>
        <begin position="42"/>
        <end position="100"/>
    </location>
</feature>
<feature type="DNA-binding region" description="H-T-H motif" evidence="1">
    <location>
        <begin position="53"/>
        <end position="72"/>
    </location>
</feature>
<accession>Q92GC8</accession>
<name>Y1195_RICCN</name>